<feature type="chain" id="PRO_0000054252" description="Putrescine transporter PotE">
    <location>
        <begin position="1"/>
        <end position="435"/>
    </location>
</feature>
<feature type="transmembrane region" description="Helical" evidence="1">
    <location>
        <begin position="8"/>
        <end position="28"/>
    </location>
</feature>
<feature type="transmembrane region" description="Helical" evidence="1">
    <location>
        <begin position="39"/>
        <end position="59"/>
    </location>
</feature>
<feature type="transmembrane region" description="Helical" evidence="1">
    <location>
        <begin position="95"/>
        <end position="115"/>
    </location>
</feature>
<feature type="transmembrane region" description="Helical" evidence="1">
    <location>
        <begin position="117"/>
        <end position="137"/>
    </location>
</feature>
<feature type="transmembrane region" description="Helical" evidence="1">
    <location>
        <begin position="148"/>
        <end position="168"/>
    </location>
</feature>
<feature type="transmembrane region" description="Helical" evidence="1">
    <location>
        <begin position="185"/>
        <end position="205"/>
    </location>
</feature>
<feature type="transmembrane region" description="Helical" evidence="1">
    <location>
        <begin position="224"/>
        <end position="244"/>
    </location>
</feature>
<feature type="transmembrane region" description="Helical" evidence="1">
    <location>
        <begin position="275"/>
        <end position="295"/>
    </location>
</feature>
<feature type="transmembrane region" description="Helical" evidence="1">
    <location>
        <begin position="320"/>
        <end position="340"/>
    </location>
</feature>
<feature type="transmembrane region" description="Helical" evidence="1">
    <location>
        <begin position="354"/>
        <end position="374"/>
    </location>
</feature>
<feature type="transmembrane region" description="Helical" evidence="1">
    <location>
        <begin position="386"/>
        <end position="406"/>
    </location>
</feature>
<feature type="transmembrane region" description="Helical" evidence="1">
    <location>
        <begin position="409"/>
        <end position="429"/>
    </location>
</feature>
<dbReference type="EMBL" id="L42023">
    <property type="protein sequence ID" value="AAC22247.1"/>
    <property type="molecule type" value="Genomic_DNA"/>
</dbReference>
<dbReference type="PIR" id="E64079">
    <property type="entry name" value="E64079"/>
</dbReference>
<dbReference type="RefSeq" id="NP_438748.1">
    <property type="nucleotide sequence ID" value="NC_000907.1"/>
</dbReference>
<dbReference type="SMR" id="P44768"/>
<dbReference type="STRING" id="71421.HI_0590"/>
<dbReference type="EnsemblBacteria" id="AAC22247">
    <property type="protein sequence ID" value="AAC22247"/>
    <property type="gene ID" value="HI_0590"/>
</dbReference>
<dbReference type="KEGG" id="hin:HI_0590"/>
<dbReference type="PATRIC" id="fig|71421.8.peg.612"/>
<dbReference type="eggNOG" id="COG0531">
    <property type="taxonomic scope" value="Bacteria"/>
</dbReference>
<dbReference type="HOGENOM" id="CLU_007946_1_0_6"/>
<dbReference type="OrthoDB" id="3185104at2"/>
<dbReference type="PhylomeDB" id="P44768"/>
<dbReference type="BioCyc" id="HINF71421:G1GJ1-602-MONOMER"/>
<dbReference type="Proteomes" id="UP000000579">
    <property type="component" value="Chromosome"/>
</dbReference>
<dbReference type="GO" id="GO:0005886">
    <property type="term" value="C:plasma membrane"/>
    <property type="evidence" value="ECO:0007669"/>
    <property type="project" value="UniProtKB-SubCell"/>
</dbReference>
<dbReference type="GO" id="GO:0015496">
    <property type="term" value="F:putrescine:ornithine antiporter activity"/>
    <property type="evidence" value="ECO:0007669"/>
    <property type="project" value="InterPro"/>
</dbReference>
<dbReference type="GO" id="GO:0015293">
    <property type="term" value="F:symporter activity"/>
    <property type="evidence" value="ECO:0007669"/>
    <property type="project" value="UniProtKB-KW"/>
</dbReference>
<dbReference type="Gene3D" id="1.20.1740.10">
    <property type="entry name" value="Amino acid/polyamine transporter I"/>
    <property type="match status" value="1"/>
</dbReference>
<dbReference type="HAMAP" id="MF_02073">
    <property type="entry name" value="Putrescine_transp"/>
    <property type="match status" value="1"/>
</dbReference>
<dbReference type="InterPro" id="IPR002293">
    <property type="entry name" value="AA/rel_permease1"/>
</dbReference>
<dbReference type="InterPro" id="IPR004754">
    <property type="entry name" value="Amino_acid_antiprt"/>
</dbReference>
<dbReference type="InterPro" id="IPR050367">
    <property type="entry name" value="APC_superfamily"/>
</dbReference>
<dbReference type="InterPro" id="IPR027566">
    <property type="entry name" value="Symport/antiport_PotE"/>
</dbReference>
<dbReference type="NCBIfam" id="TIGR00905">
    <property type="entry name" value="2A0302"/>
    <property type="match status" value="1"/>
</dbReference>
<dbReference type="NCBIfam" id="TIGR04299">
    <property type="entry name" value="antiport_PotE"/>
    <property type="match status" value="1"/>
</dbReference>
<dbReference type="NCBIfam" id="NF007938">
    <property type="entry name" value="PRK10655.1"/>
    <property type="match status" value="1"/>
</dbReference>
<dbReference type="PANTHER" id="PTHR42770">
    <property type="entry name" value="AMINO ACID TRANSPORTER-RELATED"/>
    <property type="match status" value="1"/>
</dbReference>
<dbReference type="PANTHER" id="PTHR42770:SF6">
    <property type="entry name" value="PUTRESCINE TRANSPORTER POTE"/>
    <property type="match status" value="1"/>
</dbReference>
<dbReference type="Pfam" id="PF13520">
    <property type="entry name" value="AA_permease_2"/>
    <property type="match status" value="1"/>
</dbReference>
<dbReference type="PIRSF" id="PIRSF006060">
    <property type="entry name" value="AA_transporter"/>
    <property type="match status" value="1"/>
</dbReference>
<protein>
    <recommendedName>
        <fullName evidence="1">Putrescine transporter PotE</fullName>
    </recommendedName>
    <alternativeName>
        <fullName evidence="1">Putrescine-proton symporter / putrescine-ornithine antiporter</fullName>
    </alternativeName>
</protein>
<comment type="function">
    <text evidence="1">Catalyzes both the uptake and excretion of putrescine. The uptake of putrescine is dependent on the membrane potential and the excretion involves putrescine-ornithine antiporter activity.</text>
</comment>
<comment type="catalytic activity">
    <reaction evidence="1">
        <text>putrescine(in) + H(+)(in) = putrescine(out) + H(+)(out)</text>
        <dbReference type="Rhea" id="RHEA:28891"/>
        <dbReference type="ChEBI" id="CHEBI:15378"/>
        <dbReference type="ChEBI" id="CHEBI:326268"/>
    </reaction>
    <physiologicalReaction direction="right-to-left" evidence="1">
        <dbReference type="Rhea" id="RHEA:28893"/>
    </physiologicalReaction>
</comment>
<comment type="catalytic activity">
    <reaction evidence="1">
        <text>putrescine(in) + L-ornithine(out) = putrescine(out) + L-ornithine(in)</text>
        <dbReference type="Rhea" id="RHEA:28827"/>
        <dbReference type="ChEBI" id="CHEBI:46911"/>
        <dbReference type="ChEBI" id="CHEBI:326268"/>
    </reaction>
    <physiologicalReaction direction="left-to-right" evidence="1">
        <dbReference type="Rhea" id="RHEA:28828"/>
    </physiologicalReaction>
</comment>
<comment type="subcellular location">
    <subcellularLocation>
        <location evidence="1">Cell inner membrane</location>
        <topology evidence="1">Multi-pass membrane protein</topology>
    </subcellularLocation>
</comment>
<comment type="similarity">
    <text evidence="1">Belongs to the amino acid-polyamine-organocation (APC) superfamily. Basic amino acid/polyamine antiporter (APA) (TC 2.A.3.2) family.</text>
</comment>
<evidence type="ECO:0000255" key="1">
    <source>
        <dbReference type="HAMAP-Rule" id="MF_02073"/>
    </source>
</evidence>
<gene>
    <name evidence="1" type="primary">potE</name>
    <name type="ordered locus">HI_0590</name>
</gene>
<organism>
    <name type="scientific">Haemophilus influenzae (strain ATCC 51907 / DSM 11121 / KW20 / Rd)</name>
    <dbReference type="NCBI Taxonomy" id="71421"/>
    <lineage>
        <taxon>Bacteria</taxon>
        <taxon>Pseudomonadati</taxon>
        <taxon>Pseudomonadota</taxon>
        <taxon>Gammaproteobacteria</taxon>
        <taxon>Pasteurellales</taxon>
        <taxon>Pasteurellaceae</taxon>
        <taxon>Haemophilus</taxon>
    </lineage>
</organism>
<name>POTE_HAEIN</name>
<proteinExistence type="inferred from homology"/>
<keyword id="KW-0029">Amino-acid transport</keyword>
<keyword id="KW-0050">Antiport</keyword>
<keyword id="KW-0997">Cell inner membrane</keyword>
<keyword id="KW-1003">Cell membrane</keyword>
<keyword id="KW-0472">Membrane</keyword>
<keyword id="KW-1185">Reference proteome</keyword>
<keyword id="KW-0769">Symport</keyword>
<keyword id="KW-0812">Transmembrane</keyword>
<keyword id="KW-1133">Transmembrane helix</keyword>
<keyword id="KW-0813">Transport</keyword>
<sequence length="435" mass="46349">MSAKSNKIGVVQLTILTMVNMMGSGIIMLPTKLAEIGTISIVSWLVTAVGSTALAYAFAQCGMFSKKSGGMGGYAEYSFGKAGNFMANYTYGVSLVIANTAIAISAVGYGSELFGTILSPLSIALWTIFTLWLATVLNFGGARITGNISSFTIWGVIIPVVGISIIGWKWFDGSMYVNSWNPHNVPTFEAIGVSISMTLWAFLGLESACANADAVENPEKNVPIAVLGGTLGAAVIYIVSTNVIAGIVPNLELANSTAPFGLAFAHMFDETVGKVIMGLMVMSCFGSLLGWQFTIAQVFKSSAEEGYFPAFFKKITSKDAPVVGMITITALQTLLSLMTISPSLNKQFNVLVDLAVVTNVIPYLLSMAALAVLLKAENVAPQKYKTTVFVAFIGSLYSIYALYAAGEQAMLYGSIVTFIGWTLYGFVSYKFDLKK</sequence>
<reference key="1">
    <citation type="journal article" date="1995" name="Science">
        <title>Whole-genome random sequencing and assembly of Haemophilus influenzae Rd.</title>
        <authorList>
            <person name="Fleischmann R.D."/>
            <person name="Adams M.D."/>
            <person name="White O."/>
            <person name="Clayton R.A."/>
            <person name="Kirkness E.F."/>
            <person name="Kerlavage A.R."/>
            <person name="Bult C.J."/>
            <person name="Tomb J.-F."/>
            <person name="Dougherty B.A."/>
            <person name="Merrick J.M."/>
            <person name="McKenney K."/>
            <person name="Sutton G.G."/>
            <person name="FitzHugh W."/>
            <person name="Fields C.A."/>
            <person name="Gocayne J.D."/>
            <person name="Scott J.D."/>
            <person name="Shirley R."/>
            <person name="Liu L.-I."/>
            <person name="Glodek A."/>
            <person name="Kelley J.M."/>
            <person name="Weidman J.F."/>
            <person name="Phillips C.A."/>
            <person name="Spriggs T."/>
            <person name="Hedblom E."/>
            <person name="Cotton M.D."/>
            <person name="Utterback T.R."/>
            <person name="Hanna M.C."/>
            <person name="Nguyen D.T."/>
            <person name="Saudek D.M."/>
            <person name="Brandon R.C."/>
            <person name="Fine L.D."/>
            <person name="Fritchman J.L."/>
            <person name="Fuhrmann J.L."/>
            <person name="Geoghagen N.S.M."/>
            <person name="Gnehm C.L."/>
            <person name="McDonald L.A."/>
            <person name="Small K.V."/>
            <person name="Fraser C.M."/>
            <person name="Smith H.O."/>
            <person name="Venter J.C."/>
        </authorList>
    </citation>
    <scope>NUCLEOTIDE SEQUENCE [LARGE SCALE GENOMIC DNA]</scope>
    <source>
        <strain>ATCC 51907 / DSM 11121 / KW20 / Rd</strain>
    </source>
</reference>
<accession>P44768</accession>